<organism>
    <name type="scientific">Citrobacter koseri (strain ATCC BAA-895 / CDC 4225-83 / SGSC4696)</name>
    <dbReference type="NCBI Taxonomy" id="290338"/>
    <lineage>
        <taxon>Bacteria</taxon>
        <taxon>Pseudomonadati</taxon>
        <taxon>Pseudomonadota</taxon>
        <taxon>Gammaproteobacteria</taxon>
        <taxon>Enterobacterales</taxon>
        <taxon>Enterobacteriaceae</taxon>
        <taxon>Citrobacter</taxon>
    </lineage>
</organism>
<gene>
    <name type="primary">csgG</name>
    <name type="ordered locus">CKO_02032</name>
</gene>
<proteinExistence type="inferred from homology"/>
<comment type="function">
    <text evidence="1">May be involved in the biogenesis of curli organelles.</text>
</comment>
<comment type="subcellular location">
    <subcellularLocation>
        <location evidence="2">Cell membrane</location>
        <topology evidence="2">Lipid-anchor</topology>
    </subcellularLocation>
</comment>
<comment type="similarity">
    <text evidence="3">Belongs to the CsgG family.</text>
</comment>
<comment type="sequence caution" evidence="3">
    <conflict type="erroneous initiation">
        <sequence resource="EMBL-CDS" id="ABV13158"/>
    </conflict>
</comment>
<reference key="1">
    <citation type="submission" date="2007-08" db="EMBL/GenBank/DDBJ databases">
        <authorList>
            <consortium name="The Citrobacter koseri Genome Sequencing Project"/>
            <person name="McClelland M."/>
            <person name="Sanderson E.K."/>
            <person name="Porwollik S."/>
            <person name="Spieth J."/>
            <person name="Clifton W.S."/>
            <person name="Latreille P."/>
            <person name="Courtney L."/>
            <person name="Wang C."/>
            <person name="Pepin K."/>
            <person name="Bhonagiri V."/>
            <person name="Nash W."/>
            <person name="Johnson M."/>
            <person name="Thiruvilangam P."/>
            <person name="Wilson R."/>
        </authorList>
    </citation>
    <scope>NUCLEOTIDE SEQUENCE [LARGE SCALE GENOMIC DNA]</scope>
    <source>
        <strain>ATCC BAA-895 / CDC 4225-83 / SGSC4696</strain>
    </source>
</reference>
<accession>A8AI45</accession>
<name>CSGG_CITK8</name>
<protein>
    <recommendedName>
        <fullName>Curli production assembly/transport component CsgG</fullName>
    </recommendedName>
</protein>
<feature type="signal peptide" evidence="2">
    <location>
        <begin position="1"/>
        <end position="15"/>
    </location>
</feature>
<feature type="chain" id="PRO_0000346864" description="Curli production assembly/transport component CsgG">
    <location>
        <begin position="16"/>
        <end position="277"/>
    </location>
</feature>
<feature type="lipid moiety-binding region" description="N-palmitoyl cysteine" evidence="2">
    <location>
        <position position="16"/>
    </location>
</feature>
<feature type="lipid moiety-binding region" description="S-diacylglycerol cysteine" evidence="2">
    <location>
        <position position="16"/>
    </location>
</feature>
<dbReference type="EMBL" id="CP000822">
    <property type="protein sequence ID" value="ABV13158.1"/>
    <property type="status" value="ALT_INIT"/>
    <property type="molecule type" value="Genomic_DNA"/>
</dbReference>
<dbReference type="RefSeq" id="WP_024130452.1">
    <property type="nucleotide sequence ID" value="NC_009792.1"/>
</dbReference>
<dbReference type="SMR" id="A8AI45"/>
<dbReference type="STRING" id="290338.CKO_02032"/>
<dbReference type="GeneID" id="45135994"/>
<dbReference type="KEGG" id="cko:CKO_02032"/>
<dbReference type="HOGENOM" id="CLU_056911_0_0_6"/>
<dbReference type="OrthoDB" id="1110708at2"/>
<dbReference type="Proteomes" id="UP000008148">
    <property type="component" value="Chromosome"/>
</dbReference>
<dbReference type="GO" id="GO:0030288">
    <property type="term" value="C:outer membrane-bounded periplasmic space"/>
    <property type="evidence" value="ECO:0007669"/>
    <property type="project" value="InterPro"/>
</dbReference>
<dbReference type="GO" id="GO:0005886">
    <property type="term" value="C:plasma membrane"/>
    <property type="evidence" value="ECO:0007669"/>
    <property type="project" value="UniProtKB-SubCell"/>
</dbReference>
<dbReference type="FunFam" id="3.40.50.10610:FF:000001">
    <property type="entry name" value="Curli production assembly/transport component CsgG"/>
    <property type="match status" value="1"/>
</dbReference>
<dbReference type="FunFam" id="3.40.50.10610:FF:000003">
    <property type="entry name" value="Curli production assembly/transport component CsgG"/>
    <property type="match status" value="1"/>
</dbReference>
<dbReference type="Gene3D" id="3.40.50.10610">
    <property type="entry name" value="ABC-type transport auxiliary lipoprotein component"/>
    <property type="match status" value="2"/>
</dbReference>
<dbReference type="InterPro" id="IPR005534">
    <property type="entry name" value="Curli_assmbl/transp-comp_CsgG"/>
</dbReference>
<dbReference type="NCBIfam" id="NF011731">
    <property type="entry name" value="PRK15184.1"/>
    <property type="match status" value="1"/>
</dbReference>
<dbReference type="PANTHER" id="PTHR41164">
    <property type="entry name" value="CURLI PRODUCTION ASSEMBLY/TRANSPORT COMPONENT CSGG"/>
    <property type="match status" value="1"/>
</dbReference>
<dbReference type="PANTHER" id="PTHR41164:SF1">
    <property type="entry name" value="CURLI PRODUCTION ASSEMBLY_TRANSPORT COMPONENT CSGG"/>
    <property type="match status" value="1"/>
</dbReference>
<dbReference type="Pfam" id="PF03783">
    <property type="entry name" value="CsgG"/>
    <property type="match status" value="1"/>
</dbReference>
<dbReference type="PROSITE" id="PS51257">
    <property type="entry name" value="PROKAR_LIPOPROTEIN"/>
    <property type="match status" value="1"/>
</dbReference>
<sequence>MQRLLILVAVCLLSGCLTAPPKEAAKPTLMPRAQSYKDLTHLPMPTGKIFVSVYNIQDETGQFKPYPASNFSTAVPQSATAMLVTALKDSRWFIPLERQGLQNLLNERKIIRAAQENGTVAINNRIPLQSLTAANIMVEGSIIGYESNVKSGGVGARYFGIGADTQYQLDQIAVNLRVVNVSTGEILSSVNTSKTILSYEVQAGVFRFIDYQRLLEGEIGYTSNEPVMLCLMSAIETGVIFLINDGIDRGLWDLQNKAERQNDILVKYRHMSVPPES</sequence>
<keyword id="KW-1003">Cell membrane</keyword>
<keyword id="KW-0449">Lipoprotein</keyword>
<keyword id="KW-0472">Membrane</keyword>
<keyword id="KW-0564">Palmitate</keyword>
<keyword id="KW-1185">Reference proteome</keyword>
<keyword id="KW-0732">Signal</keyword>
<evidence type="ECO:0000250" key="1"/>
<evidence type="ECO:0000255" key="2">
    <source>
        <dbReference type="PROSITE-ProRule" id="PRU00303"/>
    </source>
</evidence>
<evidence type="ECO:0000305" key="3"/>